<sequence>MDSNTITSFQVDCYLWHIRKLLSMRDMCDAPFDDRLRRDQKALKGRGSTLGLDLRVATMEGKKIVEDILKSETDENLKIAIASSPAPRYITDMSIEEISREWYMLMPRQKITGGLMVKMDQAIMDKRIILKANFSVLFDQLEALVSLRAFTDDGAMVAEISPIPSMPGHSTEDVKNAIGILIGGLEWNDNSIRASENIQRFAWGIRDENGGPPLPPKQKRYMARGIESEV</sequence>
<reference key="1">
    <citation type="journal article" date="1991" name="Virology">
        <title>Phylogenetic relationship of the nonstructural (NS) genes of influenza A viruses.</title>
        <authorList>
            <person name="Ludwig S."/>
            <person name="Schultz U."/>
            <person name="Mandler J."/>
            <person name="Fitch W.M."/>
            <person name="Scholtissek C."/>
        </authorList>
    </citation>
    <scope>NUCLEOTIDE SEQUENCE [GENOMIC RNA]</scope>
</reference>
<reference key="2">
    <citation type="journal article" date="2003" name="Virology">
        <title>Intracellular warfare between human influenza viruses and human cells: the roles of the viral NS1 protein.</title>
        <authorList>
            <person name="Krug R.M."/>
            <person name="Yuan W."/>
            <person name="Noah D.L."/>
            <person name="Latham A.G."/>
        </authorList>
    </citation>
    <scope>REVIEW</scope>
</reference>
<dbReference type="EMBL" id="M55468">
    <property type="protein sequence ID" value="AAA43138.1"/>
    <property type="molecule type" value="Genomic_RNA"/>
</dbReference>
<dbReference type="SMR" id="P30911"/>
<dbReference type="IntAct" id="P30911">
    <property type="interactions" value="1"/>
</dbReference>
<dbReference type="MINT" id="P30911"/>
<dbReference type="GO" id="GO:0030430">
    <property type="term" value="C:host cell cytoplasm"/>
    <property type="evidence" value="ECO:0007669"/>
    <property type="project" value="UniProtKB-SubCell"/>
</dbReference>
<dbReference type="GO" id="GO:0042025">
    <property type="term" value="C:host cell nucleus"/>
    <property type="evidence" value="ECO:0007669"/>
    <property type="project" value="UniProtKB-SubCell"/>
</dbReference>
<dbReference type="GO" id="GO:0030291">
    <property type="term" value="F:protein serine/threonine kinase inhibitor activity"/>
    <property type="evidence" value="ECO:0007669"/>
    <property type="project" value="UniProtKB-KW"/>
</dbReference>
<dbReference type="GO" id="GO:0003723">
    <property type="term" value="F:RNA binding"/>
    <property type="evidence" value="ECO:0007669"/>
    <property type="project" value="UniProtKB-KW"/>
</dbReference>
<dbReference type="GO" id="GO:0039540">
    <property type="term" value="P:symbiont-mediated suppression of host cytoplasmic pattern recognition receptor signaling pathway via inhibition of RIG-I activity"/>
    <property type="evidence" value="ECO:0007669"/>
    <property type="project" value="UniProtKB-KW"/>
</dbReference>
<dbReference type="GO" id="GO:0039657">
    <property type="term" value="P:symbiont-mediated suppression of host gene expression"/>
    <property type="evidence" value="ECO:0007669"/>
    <property type="project" value="UniProtKB-KW"/>
</dbReference>
<dbReference type="GO" id="GO:0039524">
    <property type="term" value="P:symbiont-mediated suppression of host mRNA processing"/>
    <property type="evidence" value="ECO:0007669"/>
    <property type="project" value="UniProtKB-KW"/>
</dbReference>
<dbReference type="GO" id="GO:0039580">
    <property type="term" value="P:symbiont-mediated suppression of host PKR/eIFalpha signaling"/>
    <property type="evidence" value="ECO:0007669"/>
    <property type="project" value="UniProtKB-KW"/>
</dbReference>
<dbReference type="GO" id="GO:0039502">
    <property type="term" value="P:symbiont-mediated suppression of host type I interferon-mediated signaling pathway"/>
    <property type="evidence" value="ECO:0007669"/>
    <property type="project" value="UniProtKB-KW"/>
</dbReference>
<dbReference type="Gene3D" id="3.30.420.330">
    <property type="entry name" value="Influenza virus non-structural protein, effector domain"/>
    <property type="match status" value="1"/>
</dbReference>
<dbReference type="Gene3D" id="1.10.287.10">
    <property type="entry name" value="S15/NS1, RNA-binding"/>
    <property type="match status" value="1"/>
</dbReference>
<dbReference type="HAMAP" id="MF_04066">
    <property type="entry name" value="INFV_NS1"/>
    <property type="match status" value="1"/>
</dbReference>
<dbReference type="InterPro" id="IPR004208">
    <property type="entry name" value="NS1"/>
</dbReference>
<dbReference type="InterPro" id="IPR000256">
    <property type="entry name" value="NS1A"/>
</dbReference>
<dbReference type="InterPro" id="IPR038064">
    <property type="entry name" value="NS1A_effect_dom-like_sf"/>
</dbReference>
<dbReference type="InterPro" id="IPR009068">
    <property type="entry name" value="uS15_NS1_RNA-bd_sf"/>
</dbReference>
<dbReference type="Pfam" id="PF00600">
    <property type="entry name" value="Flu_NS1"/>
    <property type="match status" value="1"/>
</dbReference>
<dbReference type="SUPFAM" id="SSF143021">
    <property type="entry name" value="Ns1 effector domain-like"/>
    <property type="match status" value="1"/>
</dbReference>
<dbReference type="SUPFAM" id="SSF47060">
    <property type="entry name" value="S15/NS1 RNA-binding domain"/>
    <property type="match status" value="1"/>
</dbReference>
<organismHost>
    <name type="scientific">Aves</name>
    <dbReference type="NCBI Taxonomy" id="8782"/>
</organismHost>
<evidence type="ECO:0000255" key="1">
    <source>
        <dbReference type="HAMAP-Rule" id="MF_04066"/>
    </source>
</evidence>
<protein>
    <recommendedName>
        <fullName evidence="1">Non-structural protein 1</fullName>
        <shortName evidence="1">NS1</shortName>
    </recommendedName>
    <alternativeName>
        <fullName evidence="1">NS1A</fullName>
    </alternativeName>
</protein>
<feature type="chain" id="PRO_0000078948" description="Non-structural protein 1">
    <location>
        <begin position="1"/>
        <end position="230"/>
    </location>
</feature>
<feature type="region of interest" description="RNA-binding and homodimerization" evidence="1">
    <location>
        <begin position="1"/>
        <end position="73"/>
    </location>
</feature>
<feature type="region of interest" description="CPSF4-binding" evidence="1">
    <location>
        <begin position="180"/>
        <end position="215"/>
    </location>
</feature>
<feature type="region of interest" description="PABPN1-binding" evidence="1">
    <location>
        <begin position="223"/>
        <end position="230"/>
    </location>
</feature>
<feature type="short sequence motif" description="Nuclear localization signal" evidence="1">
    <location>
        <begin position="34"/>
        <end position="38"/>
    </location>
</feature>
<feature type="short sequence motif" description="Nuclear export signal" evidence="1">
    <location>
        <begin position="137"/>
        <end position="146"/>
    </location>
</feature>
<keyword id="KW-0025">Alternative splicing</keyword>
<keyword id="KW-1262">Eukaryotic host gene expression shutoff by virus</keyword>
<keyword id="KW-1035">Host cytoplasm</keyword>
<keyword id="KW-1190">Host gene expression shutoff by virus</keyword>
<keyword id="KW-1192">Host mRNA suppression by virus</keyword>
<keyword id="KW-1048">Host nucleus</keyword>
<keyword id="KW-0945">Host-virus interaction</keyword>
<keyword id="KW-1090">Inhibition of host innate immune response by virus</keyword>
<keyword id="KW-1114">Inhibition of host interferon signaling pathway by virus</keyword>
<keyword id="KW-1102">Inhibition of host PKR by virus</keyword>
<keyword id="KW-1103">Inhibition of host pre-mRNA processing by virus</keyword>
<keyword id="KW-1088">Inhibition of host RIG-I by virus</keyword>
<keyword id="KW-1113">Inhibition of host RLR pathway by virus</keyword>
<keyword id="KW-0922">Interferon antiviral system evasion</keyword>
<keyword id="KW-0694">RNA-binding</keyword>
<keyword id="KW-0832">Ubl conjugation</keyword>
<keyword id="KW-0899">Viral immunoevasion</keyword>
<proteinExistence type="inferred from homology"/>
<gene>
    <name evidence="1" type="primary">NS</name>
</gene>
<name>NS1_I63A1</name>
<comment type="function">
    <text evidence="1">Inhibits post-transcriptional processing of cellular pre-mRNA, by binding and inhibiting two cellular proteins that are required for the 3'-end processing of cellular pre-mRNAs: the 30 kDa cleavage and polyadenylation specificity factor/CPSF4 and the poly(A)-binding protein 2/PABPN1. In turn, unprocessed 3' end pre-mRNAs accumulate in the host nucleus and are no longer exported to the cytoplasm. Cellular protein synthesis is thereby shut off very early after virus infection. Viral protein synthesis is not affected by the inhibition of the cellular 3' end processing machinery because the poly(A) tails of viral mRNAs are produced by the viral polymerase through a stuttering mechanism. Prevents the establishment of the cellular antiviral state by inhibiting TRIM25-mediated RIGI ubiquitination, which normally triggers the antiviral transduction signal that leads to the activation of type I IFN genes by transcription factors IRF3 and IRF7. Also binds poly(A) and U6 snRNA. Inhibits the integrated stress response (ISR) in the infected cell by blocking dsRNA binding by EIF2AK2/PKR and further phosphorylation of EIF2S1/EIF-2ALPHA. Stress granule formation is thus inhibited, which allows protein synthesis and viral replication.</text>
</comment>
<comment type="subunit">
    <text evidence="1">Homodimer. Interacts with host TRIM25 (via coiled coil); this interaction specifically inhibits TRIM25 multimerization and TRIM25-mediated RIGI CARD ubiquitination. Interacts with human EIF2AK2/PKR, CPSF4, IVNS1ABP and PABPN1.</text>
</comment>
<comment type="subcellular location">
    <subcellularLocation>
        <location evidence="1">Host nucleus</location>
    </subcellularLocation>
    <subcellularLocation>
        <location evidence="1">Host cytoplasm</location>
    </subcellularLocation>
    <text evidence="1">In uninfected, transfected cells, NS1 is localized in the nucleus. Only in virus infected cells, the nuclear export signal is unveiled, presumably by a viral protein, and a fraction of NS1 is exported in the cytoplasm.</text>
</comment>
<comment type="alternative products">
    <event type="alternative splicing"/>
    <isoform>
        <id>P30911-1</id>
        <name>NS1</name>
        <sequence type="displayed"/>
    </isoform>
    <isoform>
        <id>P69263-1</id>
        <name>NEP</name>
        <name>NS2</name>
        <sequence type="external"/>
    </isoform>
</comment>
<comment type="domain">
    <text evidence="1">The dsRNA-binding region is required for suppression of RNA silencing.</text>
</comment>
<comment type="PTM">
    <text evidence="1">Upon interferon induction, ISGylated via host HERC5; this results in the impairment of NS1 interaction with RNA targets due to its inability to form homodimers and to interact with host EIF2AK2/PKR.</text>
</comment>
<comment type="similarity">
    <text evidence="1">Belongs to the influenza A viruses NS1 family.</text>
</comment>
<organism>
    <name type="scientific">Influenza A virus (strain A/Turkey/Canada/1963 H6N8)</name>
    <dbReference type="NCBI Taxonomy" id="387262"/>
    <lineage>
        <taxon>Viruses</taxon>
        <taxon>Riboviria</taxon>
        <taxon>Orthornavirae</taxon>
        <taxon>Negarnaviricota</taxon>
        <taxon>Polyploviricotina</taxon>
        <taxon>Insthoviricetes</taxon>
        <taxon>Articulavirales</taxon>
        <taxon>Orthomyxoviridae</taxon>
        <taxon>Alphainfluenzavirus</taxon>
        <taxon>Alphainfluenzavirus influenzae</taxon>
        <taxon>Influenza A virus</taxon>
    </lineage>
</organism>
<accession>P30911</accession>